<sequence length="474" mass="55042">MTLKIAFFTLILLVSIERVYSSDEEYRLLKDLREGYDPVERPVADHRKPVNVKLRLILQQLVDVDERNQVITLVVWNQYTWNDYKLRWSPEEYGNITTLQIPHGTLWKPDILLFNSANEHFDASFPVHMVVSSNGDVLFAPPGIVSFSCSLSMTWFPYDQQVCYLKFGSWTYGKKLDLQIDDSDLPDGHKMDLQYYIPNGEFDLLATPAFRKSTTFLDETYVELYFHMHLKRRTMYYGLNWIVPSILISLSNILGFTMPPECGEKITLQITNFLSVMVFLAMVSEVAPPTSESIPIIAAFFSLSIVILGLSICASLIIVNIFFRHPKTHRMGDWTRYVFLEWLPWFLLMSRPEHTFCRPRREEEKNDEEAGGDGTKLLENQQHQPRPRLLVNSQLVMDSTVPYLEEIIGYLKVFKAKLDDDEEEEEEILNWRFMAMVIDRLSLFLFTGLIFGTTALIFAFCPNLFTDSPIVDIE</sequence>
<proteinExistence type="evidence at transcript level"/>
<name>ACH8_CAEEL</name>
<organism>
    <name type="scientific">Caenorhabditis elegans</name>
    <dbReference type="NCBI Taxonomy" id="6239"/>
    <lineage>
        <taxon>Eukaryota</taxon>
        <taxon>Metazoa</taxon>
        <taxon>Ecdysozoa</taxon>
        <taxon>Nematoda</taxon>
        <taxon>Chromadorea</taxon>
        <taxon>Rhabditida</taxon>
        <taxon>Rhabditina</taxon>
        <taxon>Rhabditomorpha</taxon>
        <taxon>Rhabditoidea</taxon>
        <taxon>Rhabditidae</taxon>
        <taxon>Peloderinae</taxon>
        <taxon>Caenorhabditis</taxon>
    </lineage>
</organism>
<gene>
    <name evidence="13" type="primary">eat-2</name>
    <name evidence="13" type="ORF">Y48B6A.4</name>
</gene>
<accession>Q9U298</accession>
<dbReference type="EMBL" id="BX284602">
    <property type="protein sequence ID" value="CAB54450.1"/>
    <property type="molecule type" value="Genomic_DNA"/>
</dbReference>
<dbReference type="PIR" id="T27006">
    <property type="entry name" value="T27006"/>
</dbReference>
<dbReference type="RefSeq" id="NP_496959.1">
    <property type="nucleotide sequence ID" value="NM_064558.6"/>
</dbReference>
<dbReference type="SMR" id="Q9U298"/>
<dbReference type="FunCoup" id="Q9U298">
    <property type="interactions" value="9"/>
</dbReference>
<dbReference type="STRING" id="6239.Y48B6A.4.1"/>
<dbReference type="TCDB" id="1.A.9.1.17">
    <property type="family name" value="the neurotransmitter receptor, cys loop, ligand-gated ion channel (lic) family"/>
</dbReference>
<dbReference type="GlyCosmos" id="Q9U298">
    <property type="glycosylation" value="1 site, No reported glycans"/>
</dbReference>
<dbReference type="PaxDb" id="6239-Y48B6A.4"/>
<dbReference type="EnsemblMetazoa" id="Y48B6A.4.1">
    <property type="protein sequence ID" value="Y48B6A.4.1"/>
    <property type="gene ID" value="WBGene00001133"/>
</dbReference>
<dbReference type="GeneID" id="175072"/>
<dbReference type="KEGG" id="cel:CELE_Y48B6A.4"/>
<dbReference type="UCSC" id="Y48B6A.4">
    <property type="organism name" value="c. elegans"/>
</dbReference>
<dbReference type="AGR" id="WB:WBGene00001133"/>
<dbReference type="CTD" id="175072"/>
<dbReference type="WormBase" id="Y48B6A.4">
    <property type="protein sequence ID" value="CE22119"/>
    <property type="gene ID" value="WBGene00001133"/>
    <property type="gene designation" value="eat-2"/>
</dbReference>
<dbReference type="eggNOG" id="KOG3646">
    <property type="taxonomic scope" value="Eukaryota"/>
</dbReference>
<dbReference type="HOGENOM" id="CLU_018074_1_0_1"/>
<dbReference type="InParanoid" id="Q9U298"/>
<dbReference type="OMA" id="FNSANEH"/>
<dbReference type="OrthoDB" id="5975154at2759"/>
<dbReference type="PhylomeDB" id="Q9U298"/>
<dbReference type="PRO" id="PR:Q9U298"/>
<dbReference type="Proteomes" id="UP000001940">
    <property type="component" value="Chromosome II"/>
</dbReference>
<dbReference type="Bgee" id="WBGene00001133">
    <property type="expression patterns" value="Expressed in pharyngeal muscle cell (C elegans) and 3 other cell types or tissues"/>
</dbReference>
<dbReference type="GO" id="GO:0005892">
    <property type="term" value="C:acetylcholine-gated channel complex"/>
    <property type="evidence" value="ECO:0000315"/>
    <property type="project" value="UniProtKB"/>
</dbReference>
<dbReference type="GO" id="GO:0031594">
    <property type="term" value="C:neuromuscular junction"/>
    <property type="evidence" value="ECO:0000314"/>
    <property type="project" value="WormBase"/>
</dbReference>
<dbReference type="GO" id="GO:0043005">
    <property type="term" value="C:neuron projection"/>
    <property type="evidence" value="ECO:0000318"/>
    <property type="project" value="GO_Central"/>
</dbReference>
<dbReference type="GO" id="GO:0005886">
    <property type="term" value="C:plasma membrane"/>
    <property type="evidence" value="ECO:0000314"/>
    <property type="project" value="UniProtKB"/>
</dbReference>
<dbReference type="GO" id="GO:0045211">
    <property type="term" value="C:postsynaptic membrane"/>
    <property type="evidence" value="ECO:0007669"/>
    <property type="project" value="UniProtKB-SubCell"/>
</dbReference>
<dbReference type="GO" id="GO:0045202">
    <property type="term" value="C:synapse"/>
    <property type="evidence" value="ECO:0000318"/>
    <property type="project" value="GO_Central"/>
</dbReference>
<dbReference type="GO" id="GO:0022848">
    <property type="term" value="F:acetylcholine-gated monoatomic cation-selective channel activity"/>
    <property type="evidence" value="ECO:0000315"/>
    <property type="project" value="UniProtKB"/>
</dbReference>
<dbReference type="GO" id="GO:0005231">
    <property type="term" value="F:excitatory extracellular ligand-gated monoatomic ion channel activity"/>
    <property type="evidence" value="ECO:0000318"/>
    <property type="project" value="GO_Central"/>
</dbReference>
<dbReference type="GO" id="GO:0004888">
    <property type="term" value="F:transmembrane signaling receptor activity"/>
    <property type="evidence" value="ECO:0007669"/>
    <property type="project" value="InterPro"/>
</dbReference>
<dbReference type="GO" id="GO:1904315">
    <property type="term" value="F:transmitter-gated monoatomic ion channel activity involved in regulation of postsynaptic membrane potential"/>
    <property type="evidence" value="ECO:0000318"/>
    <property type="project" value="GO_Central"/>
</dbReference>
<dbReference type="GO" id="GO:0001508">
    <property type="term" value="P:action potential"/>
    <property type="evidence" value="ECO:0000315"/>
    <property type="project" value="WormBase"/>
</dbReference>
<dbReference type="GO" id="GO:0007268">
    <property type="term" value="P:chemical synaptic transmission"/>
    <property type="evidence" value="ECO:0000318"/>
    <property type="project" value="GO_Central"/>
</dbReference>
<dbReference type="GO" id="GO:0008340">
    <property type="term" value="P:determination of adult lifespan"/>
    <property type="evidence" value="ECO:0000315"/>
    <property type="project" value="UniProtKB"/>
</dbReference>
<dbReference type="GO" id="GO:0030536">
    <property type="term" value="P:larval feeding behavior"/>
    <property type="evidence" value="ECO:0000315"/>
    <property type="project" value="UniProtKB"/>
</dbReference>
<dbReference type="GO" id="GO:0034220">
    <property type="term" value="P:monoatomic ion transmembrane transport"/>
    <property type="evidence" value="ECO:0000318"/>
    <property type="project" value="GO_Central"/>
</dbReference>
<dbReference type="GO" id="GO:0048609">
    <property type="term" value="P:multicellular organismal reproductive process"/>
    <property type="evidence" value="ECO:0000315"/>
    <property type="project" value="UniProtKB"/>
</dbReference>
<dbReference type="GO" id="GO:0010629">
    <property type="term" value="P:negative regulation of gene expression"/>
    <property type="evidence" value="ECO:0000315"/>
    <property type="project" value="UniProtKB"/>
</dbReference>
<dbReference type="GO" id="GO:0043050">
    <property type="term" value="P:nematode pharyngeal pumping"/>
    <property type="evidence" value="ECO:0000315"/>
    <property type="project" value="UniProtKB"/>
</dbReference>
<dbReference type="GO" id="GO:0007274">
    <property type="term" value="P:neuromuscular synaptic transmission"/>
    <property type="evidence" value="ECO:0000315"/>
    <property type="project" value="UniProtKB"/>
</dbReference>
<dbReference type="GO" id="GO:1904000">
    <property type="term" value="P:positive regulation of eating behavior"/>
    <property type="evidence" value="ECO:0000315"/>
    <property type="project" value="UniProtKB"/>
</dbReference>
<dbReference type="GO" id="GO:0010628">
    <property type="term" value="P:positive regulation of gene expression"/>
    <property type="evidence" value="ECO:0000315"/>
    <property type="project" value="UniProtKB"/>
</dbReference>
<dbReference type="GO" id="GO:0090326">
    <property type="term" value="P:positive regulation of locomotion involved in locomotory behavior"/>
    <property type="evidence" value="ECO:0000315"/>
    <property type="project" value="UniProtKB"/>
</dbReference>
<dbReference type="GO" id="GO:0061063">
    <property type="term" value="P:positive regulation of nematode larval development"/>
    <property type="evidence" value="ECO:0000315"/>
    <property type="project" value="UniProtKB"/>
</dbReference>
<dbReference type="GO" id="GO:0060378">
    <property type="term" value="P:regulation of brood size"/>
    <property type="evidence" value="ECO:0000315"/>
    <property type="project" value="UniProtKB"/>
</dbReference>
<dbReference type="GO" id="GO:0042391">
    <property type="term" value="P:regulation of membrane potential"/>
    <property type="evidence" value="ECO:0000318"/>
    <property type="project" value="GO_Central"/>
</dbReference>
<dbReference type="GO" id="GO:0040014">
    <property type="term" value="P:regulation of multicellular organism growth"/>
    <property type="evidence" value="ECO:0000315"/>
    <property type="project" value="WormBase"/>
</dbReference>
<dbReference type="GO" id="GO:0043051">
    <property type="term" value="P:regulation of nematode pharyngeal pumping"/>
    <property type="evidence" value="ECO:0000315"/>
    <property type="project" value="WormBase"/>
</dbReference>
<dbReference type="CDD" id="cd18997">
    <property type="entry name" value="LGIC_ECD_nAChR"/>
    <property type="match status" value="1"/>
</dbReference>
<dbReference type="CDD" id="cd19051">
    <property type="entry name" value="LGIC_TM_cation"/>
    <property type="match status" value="1"/>
</dbReference>
<dbReference type="FunFam" id="1.20.58.390:FF:000128">
    <property type="entry name" value="Neuronal acetylcholine receptor subunit eat-2"/>
    <property type="match status" value="1"/>
</dbReference>
<dbReference type="FunFam" id="1.20.58.390:FF:000140">
    <property type="entry name" value="Neuronal acetylcholine receptor subunit eat-2"/>
    <property type="match status" value="1"/>
</dbReference>
<dbReference type="FunFam" id="2.70.170.10:FF:000016">
    <property type="entry name" value="Nicotinic acetylcholine receptor subunit"/>
    <property type="match status" value="1"/>
</dbReference>
<dbReference type="Gene3D" id="2.70.170.10">
    <property type="entry name" value="Neurotransmitter-gated ion-channel ligand-binding domain"/>
    <property type="match status" value="1"/>
</dbReference>
<dbReference type="Gene3D" id="1.20.58.390">
    <property type="entry name" value="Neurotransmitter-gated ion-channel transmembrane domain"/>
    <property type="match status" value="2"/>
</dbReference>
<dbReference type="InterPro" id="IPR006202">
    <property type="entry name" value="Neur_chan_lig-bd"/>
</dbReference>
<dbReference type="InterPro" id="IPR036734">
    <property type="entry name" value="Neur_chan_lig-bd_sf"/>
</dbReference>
<dbReference type="InterPro" id="IPR006201">
    <property type="entry name" value="Neur_channel"/>
</dbReference>
<dbReference type="InterPro" id="IPR036719">
    <property type="entry name" value="Neuro-gated_channel_TM_sf"/>
</dbReference>
<dbReference type="InterPro" id="IPR038050">
    <property type="entry name" value="Neuro_actylchol_rec"/>
</dbReference>
<dbReference type="InterPro" id="IPR006029">
    <property type="entry name" value="Neurotrans-gated_channel_TM"/>
</dbReference>
<dbReference type="InterPro" id="IPR018000">
    <property type="entry name" value="Neurotransmitter_ion_chnl_CS"/>
</dbReference>
<dbReference type="InterPro" id="IPR002394">
    <property type="entry name" value="Nicotinic_acetylcholine_rcpt"/>
</dbReference>
<dbReference type="NCBIfam" id="TIGR00860">
    <property type="entry name" value="LIC"/>
    <property type="match status" value="1"/>
</dbReference>
<dbReference type="PANTHER" id="PTHR18945">
    <property type="entry name" value="NEUROTRANSMITTER GATED ION CHANNEL"/>
    <property type="match status" value="1"/>
</dbReference>
<dbReference type="Pfam" id="PF02931">
    <property type="entry name" value="Neur_chan_LBD"/>
    <property type="match status" value="1"/>
</dbReference>
<dbReference type="Pfam" id="PF02932">
    <property type="entry name" value="Neur_chan_memb"/>
    <property type="match status" value="1"/>
</dbReference>
<dbReference type="PRINTS" id="PR00254">
    <property type="entry name" value="NICOTINICR"/>
</dbReference>
<dbReference type="PRINTS" id="PR00252">
    <property type="entry name" value="NRIONCHANNEL"/>
</dbReference>
<dbReference type="SUPFAM" id="SSF90112">
    <property type="entry name" value="Neurotransmitter-gated ion-channel transmembrane pore"/>
    <property type="match status" value="1"/>
</dbReference>
<dbReference type="SUPFAM" id="SSF63712">
    <property type="entry name" value="Nicotinic receptor ligand binding domain-like"/>
    <property type="match status" value="1"/>
</dbReference>
<dbReference type="PROSITE" id="PS00236">
    <property type="entry name" value="NEUROTR_ION_CHANNEL"/>
    <property type="match status" value="1"/>
</dbReference>
<comment type="function">
    <text evidence="1 4 5 6 7 8 9 10">After binding acetylcholine, the AChR responds by an extensive change in conformation that affects all subunits and leads to opening of an ion-conducting channel across the plasma membrane (By similarity). Nicotinic acetylcholine receptor in the MC pharyngeal motor neuron involved in pharyngeal pumping (PubMed:15020415, PubMed:8601480). Has a role in the determination of life span possibly via calorific restriction which affects growth rate, although this is independent of metabolic activity (PubMed:15141086, PubMed:28853436, PubMed:30965033, PubMed:8462849, PubMed:9789046). Plays a role in the defense against the accumulation of ingested live pathogenic bacteria in the intestine (PubMed:30965033).</text>
</comment>
<comment type="subunit">
    <text evidence="1">Neuronal AChR seems to be composed of two different type of subunits: alpha and beta.</text>
</comment>
<comment type="subcellular location">
    <subcellularLocation>
        <location evidence="4">Postsynaptic cell membrane</location>
        <topology evidence="4">Multi-pass membrane protein</topology>
    </subcellularLocation>
    <subcellularLocation>
        <location evidence="4">Cell membrane</location>
        <topology evidence="4">Multi-pass membrane protein</topology>
    </subcellularLocation>
    <text evidence="4">MC motor neuron.</text>
</comment>
<comment type="tissue specificity">
    <text evidence="4">Expressed in pharyngeal muscle.</text>
</comment>
<comment type="disruption phenotype">
    <text evidence="4 5 6">Worms exhibit a lack of MC neurotransmission possibly explaining the observed reduction in pharyngeal pumping rate (PubMed:15020415). Mutants show differences in their pharyngeal responses to nicotine (PubMed:15020415). A variety of mutants show an increase in lifespan ranging from 29-57% longer than wild-type (PubMed:15141086, PubMed:28853436). Extended self-fertile reproductive span, fast body movement, and a longer pharyngeal pumping span (PubMed:15141086). The strongest allele (ad1113) shows retarded growth (PubMed:15141086). Animals generally have smaller nucleoli (PubMed:28853436). Double knockout with ncl-1 reduces the increased longevity and suppresses the reduced nucleoli size phenotype of the eat-2 single mutant, and reduces the increased ribosomal protein synthesis in the ncl-1 single mutant (e1942) (PubMed:28853436).</text>
</comment>
<comment type="similarity">
    <text evidence="11">Belongs to the ligand-gated ion channel (TC 1.A.9) family. Acetylcholine receptor (TC 1.A.9.1) subfamily.</text>
</comment>
<feature type="signal peptide" evidence="2">
    <location>
        <begin position="1"/>
        <end position="21"/>
    </location>
</feature>
<feature type="chain" id="PRO_0000306253" description="Neuronal acetylcholine receptor subunit eat-2" evidence="2">
    <location>
        <begin position="22"/>
        <end position="474"/>
    </location>
</feature>
<feature type="topological domain" description="Extracellular" evidence="2">
    <location>
        <begin position="22"/>
        <end position="237"/>
    </location>
</feature>
<feature type="transmembrane region" description="Helical" evidence="2">
    <location>
        <begin position="238"/>
        <end position="258"/>
    </location>
</feature>
<feature type="transmembrane region" description="Helical" evidence="2">
    <location>
        <begin position="266"/>
        <end position="286"/>
    </location>
</feature>
<feature type="transmembrane region" description="Helical" evidence="2">
    <location>
        <begin position="303"/>
        <end position="323"/>
    </location>
</feature>
<feature type="topological domain" description="Cytoplasmic" evidence="2">
    <location>
        <begin position="324"/>
        <end position="440"/>
    </location>
</feature>
<feature type="transmembrane region" description="Helical" evidence="2">
    <location>
        <begin position="441"/>
        <end position="461"/>
    </location>
</feature>
<feature type="region of interest" description="Disordered" evidence="3">
    <location>
        <begin position="359"/>
        <end position="378"/>
    </location>
</feature>
<feature type="glycosylation site" description="N-linked (GlcNAc...) asparagine" evidence="2">
    <location>
        <position position="95"/>
    </location>
</feature>
<feature type="disulfide bond" evidence="1">
    <location>
        <begin position="149"/>
        <end position="163"/>
    </location>
</feature>
<protein>
    <recommendedName>
        <fullName>Neuronal acetylcholine receptor subunit eat-2</fullName>
    </recommendedName>
    <alternativeName>
        <fullName>Abnormal pharyngeal pumping eat-2</fullName>
    </alternativeName>
</protein>
<reference evidence="11" key="1">
    <citation type="journal article" date="2004" name="Genetics">
        <title>eat-2 and eat-18 are required for nicotinic neurotransmission in the Caenorhabditis elegans pharynx.</title>
        <authorList>
            <person name="McKay J.P."/>
            <person name="Raizen D.M."/>
            <person name="Gottschalk A."/>
            <person name="Schafer W.R."/>
            <person name="Avery L."/>
        </authorList>
    </citation>
    <scope>NUCLEOTIDE SEQUENCE [MRNA]</scope>
    <scope>FUNCTION</scope>
    <scope>SUBCELLULAR LOCATION</scope>
    <scope>TISSUE SPECIFICITY</scope>
    <scope>DISRUPTION PHENOTYPE</scope>
    <source>
        <strain evidence="4">Bristol N2</strain>
    </source>
</reference>
<reference evidence="12" key="2">
    <citation type="journal article" date="1998" name="Science">
        <title>Genome sequence of the nematode C. elegans: a platform for investigating biology.</title>
        <authorList>
            <consortium name="The C. elegans sequencing consortium"/>
        </authorList>
    </citation>
    <scope>NUCLEOTIDE SEQUENCE [LARGE SCALE GENOMIC DNA]</scope>
    <source>
        <strain>Bristol N2</strain>
    </source>
</reference>
<reference evidence="11" key="3">
    <citation type="journal article" date="1993" name="Genetics">
        <title>The genetics of feeding in Caenorhabditis elegans.</title>
        <authorList>
            <person name="Avery L."/>
        </authorList>
    </citation>
    <scope>FUNCTION</scope>
</reference>
<reference evidence="11" key="4">
    <citation type="journal article" date="1995" name="Genetics">
        <title>Interacting genes required for pharyngeal excitation by motor neuron MC in Caenorhabditis elegans.</title>
        <authorList>
            <person name="Raizen D.M."/>
            <person name="Lee R.Y.N."/>
            <person name="Avery L."/>
        </authorList>
    </citation>
    <scope>FUNCTION</scope>
</reference>
<reference evidence="11" key="5">
    <citation type="journal article" date="1998" name="Proc. Natl. Acad. Sci. U.S.A.">
        <title>The genetics of caloric restriction in Caenorhabditis elegans.</title>
        <authorList>
            <person name="Lakowski B."/>
            <person name="Hekimi S."/>
        </authorList>
    </citation>
    <scope>FUNCTION</scope>
</reference>
<reference evidence="11" key="6">
    <citation type="journal article" date="2004" name="Proc. Natl. Acad. Sci. U.S.A.">
        <title>Measurements of age-related changes of physiological processes that predict lifespan of Caenorhabditis elegans.</title>
        <authorList>
            <person name="Huang C."/>
            <person name="Xiong C."/>
            <person name="Kornfeld K."/>
        </authorList>
    </citation>
    <scope>FUNCTION</scope>
    <scope>DISRUPTION PHENOTYPE</scope>
</reference>
<reference key="7">
    <citation type="journal article" date="2016" name="Nat. Commun.">
        <title>Small nucleoli are a cellular hallmark of longevity.</title>
        <authorList>
            <person name="Tiku V."/>
            <person name="Jain C."/>
            <person name="Raz Y."/>
            <person name="Nakamura S."/>
            <person name="Heestand B."/>
            <person name="Liu W."/>
            <person name="Spaeth M."/>
            <person name="Suchiman H.E.D."/>
            <person name="Mueller R.U."/>
            <person name="Slagboom P.E."/>
            <person name="Partridge L."/>
            <person name="Antebi A."/>
        </authorList>
    </citation>
    <scope>FUNCTION</scope>
    <scope>DISRUPTION PHENOTYPE</scope>
</reference>
<reference key="8">
    <citation type="journal article" date="2019" name="Dev. Cell">
        <title>Lifespan extension in C. elegans caused by bacterial colonization of the intestine and subsequent activation of an innate immune response.</title>
        <authorList>
            <person name="Kumar S."/>
            <person name="Egan B.M."/>
            <person name="Kocsisova Z."/>
            <person name="Schneider D.L."/>
            <person name="Murphy J.T."/>
            <person name="Diwan A."/>
            <person name="Kornfeld K."/>
        </authorList>
    </citation>
    <scope>FUNCTION</scope>
</reference>
<evidence type="ECO:0000250" key="1">
    <source>
        <dbReference type="UniProtKB" id="P22770"/>
    </source>
</evidence>
<evidence type="ECO:0000255" key="2"/>
<evidence type="ECO:0000256" key="3">
    <source>
        <dbReference type="SAM" id="MobiDB-lite"/>
    </source>
</evidence>
<evidence type="ECO:0000269" key="4">
    <source>
    </source>
</evidence>
<evidence type="ECO:0000269" key="5">
    <source>
    </source>
</evidence>
<evidence type="ECO:0000269" key="6">
    <source>
    </source>
</evidence>
<evidence type="ECO:0000269" key="7">
    <source>
    </source>
</evidence>
<evidence type="ECO:0000269" key="8">
    <source>
    </source>
</evidence>
<evidence type="ECO:0000269" key="9">
    <source>
    </source>
</evidence>
<evidence type="ECO:0000269" key="10">
    <source>
    </source>
</evidence>
<evidence type="ECO:0000305" key="11"/>
<evidence type="ECO:0000312" key="12">
    <source>
        <dbReference type="EMBL" id="CAB54450.1"/>
    </source>
</evidence>
<evidence type="ECO:0000312" key="13">
    <source>
        <dbReference type="WormBase" id="Y48B6A.4"/>
    </source>
</evidence>
<keyword id="KW-1003">Cell membrane</keyword>
<keyword id="KW-1015">Disulfide bond</keyword>
<keyword id="KW-0325">Glycoprotein</keyword>
<keyword id="KW-0407">Ion channel</keyword>
<keyword id="KW-0406">Ion transport</keyword>
<keyword id="KW-1071">Ligand-gated ion channel</keyword>
<keyword id="KW-0472">Membrane</keyword>
<keyword id="KW-0628">Postsynaptic cell membrane</keyword>
<keyword id="KW-0675">Receptor</keyword>
<keyword id="KW-1185">Reference proteome</keyword>
<keyword id="KW-0732">Signal</keyword>
<keyword id="KW-0770">Synapse</keyword>
<keyword id="KW-0812">Transmembrane</keyword>
<keyword id="KW-1133">Transmembrane helix</keyword>
<keyword id="KW-0813">Transport</keyword>